<proteinExistence type="evidence at protein level"/>
<accession>Q58CM8</accession>
<accession>Q9FF42</accession>
<organism>
    <name type="scientific">Arabidopsis thaliana</name>
    <name type="common">Mouse-ear cress</name>
    <dbReference type="NCBI Taxonomy" id="3702"/>
    <lineage>
        <taxon>Eukaryota</taxon>
        <taxon>Viridiplantae</taxon>
        <taxon>Streptophyta</taxon>
        <taxon>Embryophyta</taxon>
        <taxon>Tracheophyta</taxon>
        <taxon>Spermatophyta</taxon>
        <taxon>Magnoliopsida</taxon>
        <taxon>eudicotyledons</taxon>
        <taxon>Gunneridae</taxon>
        <taxon>Pentapetalae</taxon>
        <taxon>rosids</taxon>
        <taxon>malvids</taxon>
        <taxon>Brassicales</taxon>
        <taxon>Brassicaceae</taxon>
        <taxon>Camelineae</taxon>
        <taxon>Arabidopsis</taxon>
    </lineage>
</organism>
<name>NFYCA_ARATH</name>
<comment type="function">
    <text evidence="1">Stimulates the transcription of various genes by recognizing and binding to a CCAAT motif in promoters.</text>
</comment>
<comment type="subunit">
    <text evidence="1">Heterotrimeric transcription factor composed of three components, NF-YA, NF-YB and NF-YC. NF-YB and NF-YC must interact and dimerize for NF-YA association and DNA binding (By similarity).</text>
</comment>
<comment type="interaction">
    <interactant intactId="EBI-15191737">
        <id>Q58CM8</id>
    </interactant>
    <interactant intactId="EBI-2126009">
        <id>Q9SLG0</id>
        <label>NFYB1</label>
    </interactant>
    <organismsDiffer>false</organismsDiffer>
    <experiments>3</experiments>
</comment>
<comment type="interaction">
    <interactant intactId="EBI-15191737">
        <id>Q58CM8</id>
    </interactant>
    <interactant intactId="EBI-2475824">
        <id>Q67XJ2</id>
        <label>NFYB10</label>
    </interactant>
    <organismsDiffer>false</organismsDiffer>
    <experiments>3</experiments>
</comment>
<comment type="interaction">
    <interactant intactId="EBI-15191737">
        <id>Q58CM8</id>
    </interactant>
    <interactant intactId="EBI-15192505">
        <id>Q9FGJ3</id>
        <label>NFYB2</label>
    </interactant>
    <organismsDiffer>false</organismsDiffer>
    <experiments>3</experiments>
</comment>
<comment type="interaction">
    <interactant intactId="EBI-15191737">
        <id>Q58CM8</id>
    </interactant>
    <interactant intactId="EBI-4452064">
        <id>O23310</id>
        <label>NFYB3</label>
    </interactant>
    <organismsDiffer>false</organismsDiffer>
    <experiments>3</experiments>
</comment>
<comment type="interaction">
    <interactant intactId="EBI-15191737">
        <id>Q58CM8</id>
    </interactant>
    <interactant intactId="EBI-1751677">
        <id>O04027</id>
        <label>NFYB4</label>
    </interactant>
    <organismsDiffer>false</organismsDiffer>
    <experiments>3</experiments>
</comment>
<comment type="interaction">
    <interactant intactId="EBI-15191737">
        <id>Q58CM8</id>
    </interactant>
    <interactant intactId="EBI-2475759">
        <id>O82248</id>
        <label>NFYB5</label>
    </interactant>
    <organismsDiffer>false</organismsDiffer>
    <experiments>3</experiments>
</comment>
<comment type="interaction">
    <interactant intactId="EBI-15191737">
        <id>Q58CM8</id>
    </interactant>
    <interactant intactId="EBI-15191739">
        <id>Q84W66-2</id>
        <label>NFYB6</label>
    </interactant>
    <organismsDiffer>false</organismsDiffer>
    <experiments>3</experiments>
</comment>
<comment type="interaction">
    <interactant intactId="EBI-15191737">
        <id>Q58CM8</id>
    </interactant>
    <interactant intactId="EBI-4459822">
        <id>Q9SIT9</id>
        <label>NFYB7</label>
    </interactant>
    <organismsDiffer>false</organismsDiffer>
    <experiments>3</experiments>
</comment>
<comment type="interaction">
    <interactant intactId="EBI-15191737">
        <id>Q58CM8</id>
    </interactant>
    <interactant intactId="EBI-15192579">
        <id>Q8VYK4</id>
        <label>NFYB8</label>
    </interactant>
    <organismsDiffer>false</organismsDiffer>
    <experiments>3</experiments>
</comment>
<comment type="subcellular location">
    <subcellularLocation>
        <location evidence="1">Nucleus</location>
    </subcellularLocation>
</comment>
<comment type="similarity">
    <text evidence="3">Belongs to the NFYC/HAP5 subunit family.</text>
</comment>
<comment type="sequence caution" evidence="3">
    <conflict type="erroneous gene model prediction">
        <sequence resource="EMBL-CDS" id="BAB11281"/>
    </conflict>
</comment>
<protein>
    <recommendedName>
        <fullName>Nuclear transcription factor Y subunit C-10</fullName>
        <shortName>AtNF-YC-10</shortName>
    </recommendedName>
</protein>
<feature type="chain" id="PRO_0000218259" description="Nuclear transcription factor Y subunit C-10">
    <location>
        <begin position="1"/>
        <end position="195"/>
    </location>
</feature>
<feature type="region of interest" description="Disordered" evidence="2">
    <location>
        <begin position="1"/>
        <end position="24"/>
    </location>
</feature>
<sequence length="195" mass="22431">MRRPKSSHVRMEPVAPRSHNTMPMLDQFRSNHPETSKIEGVSSLDTALKVFWNNQREQLGNFAGQTHLPLSRVRKILKSDPEVKKISCDVPALFSKACEYFILEVTLRAWMHTQSCTRETIRRCDIFQAVKNSGTYDFLIDRVPFGPHCVTHQGVQPPAEMILPDMNVPIDMDQIEEENMMEERSVGFDLNCDLQ</sequence>
<reference key="1">
    <citation type="journal article" date="1997" name="DNA Res.">
        <title>Structural analysis of Arabidopsis thaliana chromosome 5. I. Sequence features of the 1.6 Mb regions covered by twenty physically assigned P1 clones.</title>
        <authorList>
            <person name="Sato S."/>
            <person name="Kotani H."/>
            <person name="Nakamura Y."/>
            <person name="Kaneko T."/>
            <person name="Asamizu E."/>
            <person name="Fukami M."/>
            <person name="Miyajima N."/>
            <person name="Tabata S."/>
        </authorList>
    </citation>
    <scope>NUCLEOTIDE SEQUENCE [LARGE SCALE GENOMIC DNA]</scope>
    <source>
        <strain>cv. Columbia</strain>
    </source>
</reference>
<reference key="2">
    <citation type="journal article" date="2017" name="Plant J.">
        <title>Araport11: a complete reannotation of the Arabidopsis thaliana reference genome.</title>
        <authorList>
            <person name="Cheng C.Y."/>
            <person name="Krishnakumar V."/>
            <person name="Chan A.P."/>
            <person name="Thibaud-Nissen F."/>
            <person name="Schobel S."/>
            <person name="Town C.D."/>
        </authorList>
    </citation>
    <scope>GENOME REANNOTATION</scope>
    <source>
        <strain>cv. Columbia</strain>
    </source>
</reference>
<reference key="3">
    <citation type="submission" date="2005-03" db="EMBL/GenBank/DDBJ databases">
        <title>Arabidopsis cDNA clones.</title>
        <authorList>
            <person name="Shinn P."/>
            <person name="Chen H."/>
            <person name="Cheuk R.F."/>
            <person name="Kim C.J."/>
            <person name="Ecker J.R."/>
        </authorList>
    </citation>
    <scope>NUCLEOTIDE SEQUENCE [LARGE SCALE MRNA]</scope>
    <source>
        <strain>cv. Columbia</strain>
    </source>
</reference>
<dbReference type="EMBL" id="AB005247">
    <property type="protein sequence ID" value="BAB11281.1"/>
    <property type="status" value="ALT_SEQ"/>
    <property type="molecule type" value="Genomic_DNA"/>
</dbReference>
<dbReference type="EMBL" id="CP002688">
    <property type="protein sequence ID" value="AED94272.1"/>
    <property type="molecule type" value="Genomic_DNA"/>
</dbReference>
<dbReference type="EMBL" id="BT021919">
    <property type="protein sequence ID" value="AAX49368.1"/>
    <property type="molecule type" value="mRNA"/>
</dbReference>
<dbReference type="RefSeq" id="NP_198630.2">
    <property type="nucleotide sequence ID" value="NM_123174.5"/>
</dbReference>
<dbReference type="SMR" id="Q58CM8"/>
<dbReference type="BioGRID" id="19045">
    <property type="interactions" value="27"/>
</dbReference>
<dbReference type="FunCoup" id="Q58CM8">
    <property type="interactions" value="6"/>
</dbReference>
<dbReference type="IntAct" id="Q58CM8">
    <property type="interactions" value="25"/>
</dbReference>
<dbReference type="STRING" id="3702.Q58CM8"/>
<dbReference type="PaxDb" id="3702-AT5G38140.1"/>
<dbReference type="EnsemblPlants" id="AT5G38140.1">
    <property type="protein sequence ID" value="AT5G38140.1"/>
    <property type="gene ID" value="AT5G38140"/>
</dbReference>
<dbReference type="GeneID" id="833794"/>
<dbReference type="Gramene" id="AT5G38140.1">
    <property type="protein sequence ID" value="AT5G38140.1"/>
    <property type="gene ID" value="AT5G38140"/>
</dbReference>
<dbReference type="KEGG" id="ath:AT5G38140"/>
<dbReference type="Araport" id="AT5G38140"/>
<dbReference type="TAIR" id="AT5G38140">
    <property type="gene designation" value="NF-YC12"/>
</dbReference>
<dbReference type="eggNOG" id="KOG1657">
    <property type="taxonomic scope" value="Eukaryota"/>
</dbReference>
<dbReference type="HOGENOM" id="CLU_1398105_0_0_1"/>
<dbReference type="InParanoid" id="Q58CM8"/>
<dbReference type="OMA" id="MILPDMN"/>
<dbReference type="PhylomeDB" id="Q58CM8"/>
<dbReference type="PRO" id="PR:Q58CM8"/>
<dbReference type="Proteomes" id="UP000006548">
    <property type="component" value="Chromosome 5"/>
</dbReference>
<dbReference type="ExpressionAtlas" id="Q58CM8">
    <property type="expression patterns" value="baseline and differential"/>
</dbReference>
<dbReference type="GO" id="GO:0005634">
    <property type="term" value="C:nucleus"/>
    <property type="evidence" value="ECO:0007669"/>
    <property type="project" value="UniProtKB-SubCell"/>
</dbReference>
<dbReference type="GO" id="GO:0003677">
    <property type="term" value="F:DNA binding"/>
    <property type="evidence" value="ECO:0007669"/>
    <property type="project" value="UniProtKB-KW"/>
</dbReference>
<dbReference type="GO" id="GO:0003700">
    <property type="term" value="F:DNA-binding transcription factor activity"/>
    <property type="evidence" value="ECO:0000250"/>
    <property type="project" value="TAIR"/>
</dbReference>
<dbReference type="GO" id="GO:0046982">
    <property type="term" value="F:protein heterodimerization activity"/>
    <property type="evidence" value="ECO:0007669"/>
    <property type="project" value="InterPro"/>
</dbReference>
<dbReference type="CDD" id="cd22908">
    <property type="entry name" value="HFD_NFYC-like"/>
    <property type="match status" value="1"/>
</dbReference>
<dbReference type="FunFam" id="1.10.20.10:FF:000062">
    <property type="entry name" value="Nuclear transcription factor Y subunit C"/>
    <property type="match status" value="1"/>
</dbReference>
<dbReference type="Gene3D" id="1.10.20.10">
    <property type="entry name" value="Histone, subunit A"/>
    <property type="match status" value="1"/>
</dbReference>
<dbReference type="InterPro" id="IPR003958">
    <property type="entry name" value="CBFA_NFYB_domain"/>
</dbReference>
<dbReference type="InterPro" id="IPR009072">
    <property type="entry name" value="Histone-fold"/>
</dbReference>
<dbReference type="InterPro" id="IPR050568">
    <property type="entry name" value="Transcr_DNA_Rep_Reg"/>
</dbReference>
<dbReference type="PANTHER" id="PTHR10252">
    <property type="entry name" value="HISTONE-LIKE TRANSCRIPTION FACTOR CCAAT-RELATED"/>
    <property type="match status" value="1"/>
</dbReference>
<dbReference type="PANTHER" id="PTHR10252:SF124">
    <property type="entry name" value="NUCLEAR TRANSCRIPTION FACTOR Y SUBUNIT C-10"/>
    <property type="match status" value="1"/>
</dbReference>
<dbReference type="Pfam" id="PF00808">
    <property type="entry name" value="CBFD_NFYB_HMF"/>
    <property type="match status" value="1"/>
</dbReference>
<dbReference type="SUPFAM" id="SSF47113">
    <property type="entry name" value="Histone-fold"/>
    <property type="match status" value="1"/>
</dbReference>
<keyword id="KW-0010">Activator</keyword>
<keyword id="KW-0238">DNA-binding</keyword>
<keyword id="KW-0539">Nucleus</keyword>
<keyword id="KW-1185">Reference proteome</keyword>
<keyword id="KW-0804">Transcription</keyword>
<keyword id="KW-0805">Transcription regulation</keyword>
<evidence type="ECO:0000250" key="1"/>
<evidence type="ECO:0000256" key="2">
    <source>
        <dbReference type="SAM" id="MobiDB-lite"/>
    </source>
</evidence>
<evidence type="ECO:0000305" key="3"/>
<gene>
    <name type="primary">NFYC10</name>
    <name type="ordered locus">At5g38140</name>
    <name type="ORF">MXA21.21</name>
</gene>